<evidence type="ECO:0000250" key="1"/>
<evidence type="ECO:0000255" key="2"/>
<evidence type="ECO:0000305" key="3"/>
<proteinExistence type="inferred from homology"/>
<accession>B4IMH3</accession>
<keyword id="KW-0004">4Fe-4S</keyword>
<keyword id="KW-0408">Iron</keyword>
<keyword id="KW-0411">Iron-sulfur</keyword>
<keyword id="KW-0479">Metal-binding</keyword>
<keyword id="KW-1185">Reference proteome</keyword>
<feature type="chain" id="PRO_0000383706" description="Probable cytosolic Fe-S cluster assembly factor GM20417">
    <location>
        <begin position="1"/>
        <end position="477"/>
    </location>
</feature>
<feature type="binding site" evidence="2">
    <location>
        <position position="23"/>
    </location>
    <ligand>
        <name>[4Fe-4S] cluster</name>
        <dbReference type="ChEBI" id="CHEBI:49883"/>
        <label>1</label>
    </ligand>
</feature>
<feature type="binding site" evidence="2">
    <location>
        <position position="68"/>
    </location>
    <ligand>
        <name>[4Fe-4S] cluster</name>
        <dbReference type="ChEBI" id="CHEBI:49883"/>
        <label>1</label>
    </ligand>
</feature>
<feature type="binding site" evidence="2">
    <location>
        <position position="71"/>
    </location>
    <ligand>
        <name>[4Fe-4S] cluster</name>
        <dbReference type="ChEBI" id="CHEBI:49883"/>
        <label>1</label>
    </ligand>
</feature>
<feature type="binding site" evidence="2">
    <location>
        <position position="74"/>
    </location>
    <ligand>
        <name>[4Fe-4S] cluster</name>
        <dbReference type="ChEBI" id="CHEBI:49883"/>
        <label>1</label>
    </ligand>
</feature>
<feature type="binding site" evidence="2">
    <location>
        <position position="187"/>
    </location>
    <ligand>
        <name>[4Fe-4S] cluster</name>
        <dbReference type="ChEBI" id="CHEBI:49883"/>
        <label>2</label>
    </ligand>
</feature>
<feature type="binding site" evidence="2">
    <location>
        <position position="243"/>
    </location>
    <ligand>
        <name>[4Fe-4S] cluster</name>
        <dbReference type="ChEBI" id="CHEBI:49883"/>
        <label>2</label>
    </ligand>
</feature>
<feature type="binding site" evidence="2">
    <location>
        <position position="395"/>
    </location>
    <ligand>
        <name>[4Fe-4S] cluster</name>
        <dbReference type="ChEBI" id="CHEBI:49883"/>
        <label>2</label>
    </ligand>
</feature>
<feature type="binding site" evidence="2">
    <location>
        <position position="399"/>
    </location>
    <ligand>
        <name>[4Fe-4S] cluster</name>
        <dbReference type="ChEBI" id="CHEBI:49883"/>
        <label>2</label>
    </ligand>
</feature>
<protein>
    <recommendedName>
        <fullName>Probable cytosolic Fe-S cluster assembly factor GM20417</fullName>
    </recommendedName>
</protein>
<sequence length="477" mass="54593">MSRWSTALQLTDIDDFITPSQICIKPVQIDKARSKTGAKIKIKGDSCFEESESGNLKLNKVDISLQDCLACSGCITSAEEVLITQQSQEELLKILQENSKNKASEDWDNVRTIVITLATQPLLSLAHRYQIGVEDAARHLNGYFRSLGADYVLSTKVADDIALLECRQEFVDRYRENENLTMLSSSCPGWVCYAEKTHGNFILPYVSTTRSPQQIMGVLVKQILADKINVPASRIYHVTVMPCYDKKLEASREDFFSKANNSRDVDCVITSVEVEQLLSEAQRPLSQYDLFDLDWPWSNVRPEFMVWAHEKTQSGGYAEHIFKFAAKHIFNEDLTTELEFKQLKNRDFREIILKQNGKTVLKFAIANGFRNIQNLVQKLKREKLSNYHFVEVMACPSGCINGGAQIRPTTGQHVRELTRKLEELYHNLPRSEPENSLTKHIYNDFLDGFQTDKSYEMLHTRYHDVVSDLSISLNINW</sequence>
<reference key="1">
    <citation type="journal article" date="2007" name="Nature">
        <title>Evolution of genes and genomes on the Drosophila phylogeny.</title>
        <authorList>
            <consortium name="Drosophila 12 genomes consortium"/>
        </authorList>
    </citation>
    <scope>NUCLEOTIDE SEQUENCE [LARGE SCALE GENOMIC DNA]</scope>
    <source>
        <strain>Rob3c / Tucson 14021-0248.25</strain>
    </source>
</reference>
<organism>
    <name type="scientific">Drosophila sechellia</name>
    <name type="common">Fruit fly</name>
    <dbReference type="NCBI Taxonomy" id="7238"/>
    <lineage>
        <taxon>Eukaryota</taxon>
        <taxon>Metazoa</taxon>
        <taxon>Ecdysozoa</taxon>
        <taxon>Arthropoda</taxon>
        <taxon>Hexapoda</taxon>
        <taxon>Insecta</taxon>
        <taxon>Pterygota</taxon>
        <taxon>Neoptera</taxon>
        <taxon>Endopterygota</taxon>
        <taxon>Diptera</taxon>
        <taxon>Brachycera</taxon>
        <taxon>Muscomorpha</taxon>
        <taxon>Ephydroidea</taxon>
        <taxon>Drosophilidae</taxon>
        <taxon>Drosophila</taxon>
        <taxon>Sophophora</taxon>
    </lineage>
</organism>
<dbReference type="EMBL" id="CH480997">
    <property type="protein sequence ID" value="EDW46318.1"/>
    <property type="status" value="ALT_SEQ"/>
    <property type="molecule type" value="Genomic_DNA"/>
</dbReference>
<dbReference type="RefSeq" id="XP_002044933.1">
    <property type="nucleotide sequence ID" value="XM_002044897.1"/>
</dbReference>
<dbReference type="SMR" id="B4IMH3"/>
<dbReference type="STRING" id="7238.B4IMH3"/>
<dbReference type="EnsemblMetazoa" id="XM_032721138.1">
    <property type="protein sequence ID" value="XP_032577029.1"/>
    <property type="gene ID" value="LOC6620730"/>
</dbReference>
<dbReference type="Proteomes" id="UP000001292">
    <property type="component" value="Unassembled WGS sequence"/>
</dbReference>
<dbReference type="GO" id="GO:0051539">
    <property type="term" value="F:4 iron, 4 sulfur cluster binding"/>
    <property type="evidence" value="ECO:0007669"/>
    <property type="project" value="UniProtKB-KW"/>
</dbReference>
<dbReference type="GO" id="GO:0046872">
    <property type="term" value="F:metal ion binding"/>
    <property type="evidence" value="ECO:0007669"/>
    <property type="project" value="UniProtKB-KW"/>
</dbReference>
<dbReference type="GO" id="GO:0016226">
    <property type="term" value="P:iron-sulfur cluster assembly"/>
    <property type="evidence" value="ECO:0000250"/>
    <property type="project" value="UniProtKB"/>
</dbReference>
<dbReference type="FunFam" id="3.30.70.20:FF:000042">
    <property type="entry name" value="Cytosolic Fe-S cluster assembly factor NAR1"/>
    <property type="match status" value="1"/>
</dbReference>
<dbReference type="Gene3D" id="3.40.50.1780">
    <property type="match status" value="1"/>
</dbReference>
<dbReference type="Gene3D" id="3.40.950.10">
    <property type="entry name" value="Fe-only Hydrogenase (Larger Subunit), Chain L, domain 3"/>
    <property type="match status" value="1"/>
</dbReference>
<dbReference type="InterPro" id="IPR050340">
    <property type="entry name" value="Cytosolic_Fe-S_CAF"/>
</dbReference>
<dbReference type="InterPro" id="IPR009016">
    <property type="entry name" value="Fe_hydrogenase"/>
</dbReference>
<dbReference type="InterPro" id="IPR004108">
    <property type="entry name" value="Fe_hydrogenase_lsu_C"/>
</dbReference>
<dbReference type="InterPro" id="IPR003149">
    <property type="entry name" value="Fe_hydrogenase_ssu"/>
</dbReference>
<dbReference type="PANTHER" id="PTHR11615">
    <property type="entry name" value="NITRATE, FORMATE, IRON DEHYDROGENASE"/>
    <property type="match status" value="1"/>
</dbReference>
<dbReference type="Pfam" id="PF02906">
    <property type="entry name" value="Fe_hyd_lg_C"/>
    <property type="match status" value="1"/>
</dbReference>
<dbReference type="SMART" id="SM00902">
    <property type="entry name" value="Fe_hyd_SSU"/>
    <property type="match status" value="1"/>
</dbReference>
<dbReference type="SUPFAM" id="SSF53920">
    <property type="entry name" value="Fe-only hydrogenase"/>
    <property type="match status" value="1"/>
</dbReference>
<name>NARF_DROSE</name>
<gene>
    <name type="ORF">GM20417</name>
</gene>
<comment type="function">
    <text evidence="1">Component of the cytosolic iron-sulfur (Fe/S) protein assembly machinery. Required for maturation of extramitochondrial Fe/S proteins (By similarity).</text>
</comment>
<comment type="similarity">
    <text evidence="3">Belongs to the NARF family.</text>
</comment>
<comment type="sequence caution" evidence="3">
    <conflict type="erroneous gene model prediction">
        <sequence resource="EMBL-CDS" id="EDW46318"/>
    </conflict>
</comment>